<protein>
    <recommendedName>
        <fullName evidence="1">Pyridoxal 5'-phosphate synthase subunit PdxT</fullName>
        <ecNumber evidence="1">4.3.3.6</ecNumber>
    </recommendedName>
    <alternativeName>
        <fullName evidence="1">Pdx2</fullName>
    </alternativeName>
    <alternativeName>
        <fullName evidence="1">Pyridoxal 5'-phosphate synthase glutaminase subunit</fullName>
        <ecNumber evidence="1">3.5.1.2</ecNumber>
    </alternativeName>
</protein>
<keyword id="KW-0315">Glutamine amidotransferase</keyword>
<keyword id="KW-0378">Hydrolase</keyword>
<keyword id="KW-0456">Lyase</keyword>
<keyword id="KW-0663">Pyridoxal phosphate</keyword>
<dbReference type="EC" id="4.3.3.6" evidence="1"/>
<dbReference type="EC" id="3.5.1.2" evidence="1"/>
<dbReference type="EMBL" id="CP000875">
    <property type="protein sequence ID" value="ABX06443.1"/>
    <property type="molecule type" value="Genomic_DNA"/>
</dbReference>
<dbReference type="SMR" id="A9B890"/>
<dbReference type="FunCoup" id="A9B890">
    <property type="interactions" value="234"/>
</dbReference>
<dbReference type="STRING" id="316274.Haur_3807"/>
<dbReference type="MEROPS" id="C26.A32"/>
<dbReference type="KEGG" id="hau:Haur_3807"/>
<dbReference type="eggNOG" id="COG0311">
    <property type="taxonomic scope" value="Bacteria"/>
</dbReference>
<dbReference type="HOGENOM" id="CLU_069674_2_0_0"/>
<dbReference type="InParanoid" id="A9B890"/>
<dbReference type="UniPathway" id="UPA00245"/>
<dbReference type="Proteomes" id="UP000000787">
    <property type="component" value="Chromosome"/>
</dbReference>
<dbReference type="GO" id="GO:0005829">
    <property type="term" value="C:cytosol"/>
    <property type="evidence" value="ECO:0007669"/>
    <property type="project" value="TreeGrafter"/>
</dbReference>
<dbReference type="GO" id="GO:1903600">
    <property type="term" value="C:glutaminase complex"/>
    <property type="evidence" value="ECO:0007669"/>
    <property type="project" value="TreeGrafter"/>
</dbReference>
<dbReference type="GO" id="GO:0004359">
    <property type="term" value="F:glutaminase activity"/>
    <property type="evidence" value="ECO:0007669"/>
    <property type="project" value="UniProtKB-UniRule"/>
</dbReference>
<dbReference type="GO" id="GO:0036381">
    <property type="term" value="F:pyridoxal 5'-phosphate synthase (glutamine hydrolysing) activity"/>
    <property type="evidence" value="ECO:0007669"/>
    <property type="project" value="UniProtKB-UniRule"/>
</dbReference>
<dbReference type="GO" id="GO:0006543">
    <property type="term" value="P:glutamine catabolic process"/>
    <property type="evidence" value="ECO:0007669"/>
    <property type="project" value="UniProtKB-UniRule"/>
</dbReference>
<dbReference type="GO" id="GO:0042823">
    <property type="term" value="P:pyridoxal phosphate biosynthetic process"/>
    <property type="evidence" value="ECO:0007669"/>
    <property type="project" value="UniProtKB-UniRule"/>
</dbReference>
<dbReference type="GO" id="GO:0008614">
    <property type="term" value="P:pyridoxine metabolic process"/>
    <property type="evidence" value="ECO:0007669"/>
    <property type="project" value="TreeGrafter"/>
</dbReference>
<dbReference type="CDD" id="cd01749">
    <property type="entry name" value="GATase1_PB"/>
    <property type="match status" value="1"/>
</dbReference>
<dbReference type="FunFam" id="3.40.50.880:FF:000041">
    <property type="entry name" value="Glutamine amidotransferase subunit pdxT, putative"/>
    <property type="match status" value="1"/>
</dbReference>
<dbReference type="Gene3D" id="3.40.50.880">
    <property type="match status" value="1"/>
</dbReference>
<dbReference type="HAMAP" id="MF_01615">
    <property type="entry name" value="PdxT"/>
    <property type="match status" value="1"/>
</dbReference>
<dbReference type="InterPro" id="IPR029062">
    <property type="entry name" value="Class_I_gatase-like"/>
</dbReference>
<dbReference type="InterPro" id="IPR002161">
    <property type="entry name" value="PdxT/SNO"/>
</dbReference>
<dbReference type="InterPro" id="IPR021196">
    <property type="entry name" value="PdxT/SNO_CS"/>
</dbReference>
<dbReference type="NCBIfam" id="TIGR03800">
    <property type="entry name" value="PLP_synth_Pdx2"/>
    <property type="match status" value="1"/>
</dbReference>
<dbReference type="PANTHER" id="PTHR31559">
    <property type="entry name" value="PYRIDOXAL 5'-PHOSPHATE SYNTHASE SUBUNIT SNO"/>
    <property type="match status" value="1"/>
</dbReference>
<dbReference type="PANTHER" id="PTHR31559:SF0">
    <property type="entry name" value="PYRIDOXAL 5'-PHOSPHATE SYNTHASE SUBUNIT SNO1-RELATED"/>
    <property type="match status" value="1"/>
</dbReference>
<dbReference type="Pfam" id="PF01174">
    <property type="entry name" value="SNO"/>
    <property type="match status" value="1"/>
</dbReference>
<dbReference type="PIRSF" id="PIRSF005639">
    <property type="entry name" value="Glut_amidoT_SNO"/>
    <property type="match status" value="1"/>
</dbReference>
<dbReference type="SUPFAM" id="SSF52317">
    <property type="entry name" value="Class I glutamine amidotransferase-like"/>
    <property type="match status" value="1"/>
</dbReference>
<dbReference type="PROSITE" id="PS01236">
    <property type="entry name" value="PDXT_SNO_1"/>
    <property type="match status" value="1"/>
</dbReference>
<dbReference type="PROSITE" id="PS51130">
    <property type="entry name" value="PDXT_SNO_2"/>
    <property type="match status" value="1"/>
</dbReference>
<comment type="function">
    <text evidence="1">Catalyzes the hydrolysis of glutamine to glutamate and ammonia as part of the biosynthesis of pyridoxal 5'-phosphate. The resulting ammonia molecule is channeled to the active site of PdxS.</text>
</comment>
<comment type="catalytic activity">
    <reaction evidence="1">
        <text>aldehydo-D-ribose 5-phosphate + D-glyceraldehyde 3-phosphate + L-glutamine = pyridoxal 5'-phosphate + L-glutamate + phosphate + 3 H2O + H(+)</text>
        <dbReference type="Rhea" id="RHEA:31507"/>
        <dbReference type="ChEBI" id="CHEBI:15377"/>
        <dbReference type="ChEBI" id="CHEBI:15378"/>
        <dbReference type="ChEBI" id="CHEBI:29985"/>
        <dbReference type="ChEBI" id="CHEBI:43474"/>
        <dbReference type="ChEBI" id="CHEBI:58273"/>
        <dbReference type="ChEBI" id="CHEBI:58359"/>
        <dbReference type="ChEBI" id="CHEBI:59776"/>
        <dbReference type="ChEBI" id="CHEBI:597326"/>
        <dbReference type="EC" id="4.3.3.6"/>
    </reaction>
</comment>
<comment type="catalytic activity">
    <reaction evidence="1">
        <text>L-glutamine + H2O = L-glutamate + NH4(+)</text>
        <dbReference type="Rhea" id="RHEA:15889"/>
        <dbReference type="ChEBI" id="CHEBI:15377"/>
        <dbReference type="ChEBI" id="CHEBI:28938"/>
        <dbReference type="ChEBI" id="CHEBI:29985"/>
        <dbReference type="ChEBI" id="CHEBI:58359"/>
        <dbReference type="EC" id="3.5.1.2"/>
    </reaction>
</comment>
<comment type="pathway">
    <text evidence="1">Cofactor biosynthesis; pyridoxal 5'-phosphate biosynthesis.</text>
</comment>
<comment type="subunit">
    <text evidence="1">In the presence of PdxS, forms a dodecamer of heterodimers. Only shows activity in the heterodimer.</text>
</comment>
<comment type="similarity">
    <text evidence="1">Belongs to the glutaminase PdxT/SNO family.</text>
</comment>
<feature type="chain" id="PRO_1000185891" description="Pyridoxal 5'-phosphate synthase subunit PdxT">
    <location>
        <begin position="1"/>
        <end position="190"/>
    </location>
</feature>
<feature type="active site" description="Nucleophile" evidence="1">
    <location>
        <position position="78"/>
    </location>
</feature>
<feature type="active site" description="Charge relay system" evidence="1">
    <location>
        <position position="174"/>
    </location>
</feature>
<feature type="active site" description="Charge relay system" evidence="1">
    <location>
        <position position="176"/>
    </location>
</feature>
<feature type="binding site" evidence="1">
    <location>
        <begin position="46"/>
        <end position="48"/>
    </location>
    <ligand>
        <name>L-glutamine</name>
        <dbReference type="ChEBI" id="CHEBI:58359"/>
    </ligand>
</feature>
<feature type="binding site" evidence="1">
    <location>
        <position position="108"/>
    </location>
    <ligand>
        <name>L-glutamine</name>
        <dbReference type="ChEBI" id="CHEBI:58359"/>
    </ligand>
</feature>
<feature type="binding site" evidence="1">
    <location>
        <begin position="137"/>
        <end position="138"/>
    </location>
    <ligand>
        <name>L-glutamine</name>
        <dbReference type="ChEBI" id="CHEBI:58359"/>
    </ligand>
</feature>
<gene>
    <name evidence="1" type="primary">pdxT</name>
    <name type="ordered locus">Haur_3807</name>
</gene>
<proteinExistence type="inferred from homology"/>
<name>PDXT_HERA2</name>
<accession>A9B890</accession>
<organism>
    <name type="scientific">Herpetosiphon aurantiacus (strain ATCC 23779 / DSM 785 / 114-95)</name>
    <dbReference type="NCBI Taxonomy" id="316274"/>
    <lineage>
        <taxon>Bacteria</taxon>
        <taxon>Bacillati</taxon>
        <taxon>Chloroflexota</taxon>
        <taxon>Chloroflexia</taxon>
        <taxon>Herpetosiphonales</taxon>
        <taxon>Herpetosiphonaceae</taxon>
        <taxon>Herpetosiphon</taxon>
    </lineage>
</organism>
<evidence type="ECO:0000255" key="1">
    <source>
        <dbReference type="HAMAP-Rule" id="MF_01615"/>
    </source>
</evidence>
<sequence>MTVGVLALQGAFIEHETMLQGLGVATLQVRLPEQLVQVERLIIPGGESTTIGKLLVRFDLLEPIQQRAAEGMPIWGTCAGMILLAKEIAEGRVEGQPALGLMDITARRNAFGRQVDSFETNLQVPVLGEAPFHAVFIRAPQIDKVGEAVETLASLDDGRIVAARQGKLLATAFHPELTGDARFHELFLGL</sequence>
<reference key="1">
    <citation type="journal article" date="2011" name="Stand. Genomic Sci.">
        <title>Complete genome sequence of the filamentous gliding predatory bacterium Herpetosiphon aurantiacus type strain (114-95(T)).</title>
        <authorList>
            <person name="Kiss H."/>
            <person name="Nett M."/>
            <person name="Domin N."/>
            <person name="Martin K."/>
            <person name="Maresca J.A."/>
            <person name="Copeland A."/>
            <person name="Lapidus A."/>
            <person name="Lucas S."/>
            <person name="Berry K.W."/>
            <person name="Glavina Del Rio T."/>
            <person name="Dalin E."/>
            <person name="Tice H."/>
            <person name="Pitluck S."/>
            <person name="Richardson P."/>
            <person name="Bruce D."/>
            <person name="Goodwin L."/>
            <person name="Han C."/>
            <person name="Detter J.C."/>
            <person name="Schmutz J."/>
            <person name="Brettin T."/>
            <person name="Land M."/>
            <person name="Hauser L."/>
            <person name="Kyrpides N.C."/>
            <person name="Ivanova N."/>
            <person name="Goeker M."/>
            <person name="Woyke T."/>
            <person name="Klenk H.P."/>
            <person name="Bryant D.A."/>
        </authorList>
    </citation>
    <scope>NUCLEOTIDE SEQUENCE [LARGE SCALE GENOMIC DNA]</scope>
    <source>
        <strain>ATCC 23779 / DSM 785 / 114-95</strain>
    </source>
</reference>